<dbReference type="EC" id="4.1.3.27"/>
<dbReference type="EMBL" id="K01391">
    <property type="protein sequence ID" value="AAA22865.1"/>
    <property type="status" value="ALT_FRAME"/>
    <property type="molecule type" value="Genomic_DNA"/>
</dbReference>
<dbReference type="EMBL" id="M80245">
    <property type="protein sequence ID" value="AAA20862.1"/>
    <property type="molecule type" value="Genomic_DNA"/>
</dbReference>
<dbReference type="EMBL" id="AL009126">
    <property type="protein sequence ID" value="CAB14184.1"/>
    <property type="molecule type" value="Genomic_DNA"/>
</dbReference>
<dbReference type="EMBL" id="M27566">
    <property type="protein sequence ID" value="AAA22875.1"/>
    <property type="molecule type" value="Genomic_DNA"/>
</dbReference>
<dbReference type="PIR" id="A01119">
    <property type="entry name" value="NNBS1"/>
</dbReference>
<dbReference type="RefSeq" id="NP_390149.1">
    <property type="nucleotide sequence ID" value="NC_000964.3"/>
</dbReference>
<dbReference type="RefSeq" id="WP_003246124.1">
    <property type="nucleotide sequence ID" value="NZ_OZ025638.1"/>
</dbReference>
<dbReference type="SMR" id="P03963"/>
<dbReference type="FunCoup" id="P03963">
    <property type="interactions" value="446"/>
</dbReference>
<dbReference type="STRING" id="224308.BSU22680"/>
<dbReference type="PaxDb" id="224308-BSU22680"/>
<dbReference type="EnsemblBacteria" id="CAB14184">
    <property type="protein sequence ID" value="CAB14184"/>
    <property type="gene ID" value="BSU_22680"/>
</dbReference>
<dbReference type="GeneID" id="939008"/>
<dbReference type="KEGG" id="bsu:BSU22680"/>
<dbReference type="eggNOG" id="COG0147">
    <property type="taxonomic scope" value="Bacteria"/>
</dbReference>
<dbReference type="InParanoid" id="P03963"/>
<dbReference type="OrthoDB" id="9803598at2"/>
<dbReference type="PhylomeDB" id="P03963"/>
<dbReference type="BioCyc" id="BSUB:BSU22680-MONOMER"/>
<dbReference type="UniPathway" id="UPA00035">
    <property type="reaction ID" value="UER00040"/>
</dbReference>
<dbReference type="Proteomes" id="UP000001570">
    <property type="component" value="Chromosome"/>
</dbReference>
<dbReference type="GO" id="GO:0004049">
    <property type="term" value="F:anthranilate synthase activity"/>
    <property type="evidence" value="ECO:0007669"/>
    <property type="project" value="UniProtKB-EC"/>
</dbReference>
<dbReference type="GO" id="GO:0046872">
    <property type="term" value="F:metal ion binding"/>
    <property type="evidence" value="ECO:0007669"/>
    <property type="project" value="UniProtKB-KW"/>
</dbReference>
<dbReference type="GO" id="GO:0000162">
    <property type="term" value="P:L-tryptophan biosynthetic process"/>
    <property type="evidence" value="ECO:0000318"/>
    <property type="project" value="GO_Central"/>
</dbReference>
<dbReference type="Gene3D" id="3.60.120.10">
    <property type="entry name" value="Anthranilate synthase"/>
    <property type="match status" value="1"/>
</dbReference>
<dbReference type="InterPro" id="IPR005801">
    <property type="entry name" value="ADC_synthase"/>
</dbReference>
<dbReference type="InterPro" id="IPR019999">
    <property type="entry name" value="Anth_synth_I-like"/>
</dbReference>
<dbReference type="InterPro" id="IPR006805">
    <property type="entry name" value="Anth_synth_I_N"/>
</dbReference>
<dbReference type="InterPro" id="IPR005256">
    <property type="entry name" value="Anth_synth_I_PabB"/>
</dbReference>
<dbReference type="InterPro" id="IPR015890">
    <property type="entry name" value="Chorismate_C"/>
</dbReference>
<dbReference type="NCBIfam" id="TIGR00564">
    <property type="entry name" value="trpE_most"/>
    <property type="match status" value="1"/>
</dbReference>
<dbReference type="PANTHER" id="PTHR11236">
    <property type="entry name" value="AMINOBENZOATE/ANTHRANILATE SYNTHASE"/>
    <property type="match status" value="1"/>
</dbReference>
<dbReference type="PANTHER" id="PTHR11236:SF48">
    <property type="entry name" value="ISOCHORISMATE SYNTHASE MENF"/>
    <property type="match status" value="1"/>
</dbReference>
<dbReference type="Pfam" id="PF04715">
    <property type="entry name" value="Anth_synt_I_N"/>
    <property type="match status" value="1"/>
</dbReference>
<dbReference type="Pfam" id="PF00425">
    <property type="entry name" value="Chorismate_bind"/>
    <property type="match status" value="1"/>
</dbReference>
<dbReference type="PRINTS" id="PR00095">
    <property type="entry name" value="ANTSNTHASEI"/>
</dbReference>
<dbReference type="SUPFAM" id="SSF56322">
    <property type="entry name" value="ADC synthase"/>
    <property type="match status" value="1"/>
</dbReference>
<sequence length="515" mass="58116">MNFQSNISAFLEDSLSHHTIPIVETFTVDTLTPIQMIEKLDREITYLLESKDDTSTWSRYSFIGLNPFLTIKEEQGRFSAADQDSKSLYTGNELKEVLNWMNTTYKIKTPELGIPFVGGAVGYLSYDMIPLIEPSVPSHTKETDMEKCMLFVCRTLIAYDHETKNVHFIQYARLTGEETKNEKMDVFHQNHLELQNLIEKMMDQKNIKELFLSADSYKTPSFETVSSNYEKSAFMADVEKIKSYIKAGDIFQGVLSQKFEVPIKADAFELYRVLRIVNPSPYMYYMKLLDREIVGSSPERLIHVQDGHLEIHPIAGTRKRGADKAEDERLKVELMKDEKEKAEHYMLVDLARNDIGRVAEYGSVSVPEFTKIVSFSHVMHIISVVTGRLKKGVHPVDALMSAFPAGTLTGAPKIRAMQLLQELEPTPRETYGGCIAYIGFDGNIDSCITIRTMSVKNGVASIQAGAGIVADSVPEAEYEESCNKAGALLKTIHIAEDMFHSKEDKADEQISTIVR</sequence>
<reference key="1">
    <citation type="journal article" date="1985" name="Gene">
        <title>Nucleotide sequence of the Bacillus subtilis tryptophan operon.</title>
        <authorList>
            <person name="Henner D.J."/>
            <person name="Band L."/>
            <person name="Shimotsu H."/>
        </authorList>
    </citation>
    <scope>PRELIMINARY NUCLEOTIDE SEQUENCE [GENOMIC DNA]</scope>
</reference>
<reference key="2">
    <citation type="journal article" date="1984" name="Gene">
        <title>Nucleotide sequence of the Bacillus subtilis trpE and trpD genes.</title>
        <authorList>
            <person name="Band L."/>
            <person name="Shimotsu H."/>
            <person name="Henner D.J."/>
        </authorList>
    </citation>
    <scope>PRELIMINARY NUCLEOTIDE SEQUENCE [GENOMIC DNA]</scope>
</reference>
<reference key="3">
    <citation type="submission" date="1992-01" db="EMBL/GenBank/DDBJ databases">
        <title>Sequence of Bacillus subtilis dbpA, mtr(A,B), gerC(1-3), ndk, cheR, aro(B,E,F,H), trp(A-F), hisH, and tyrA genes.</title>
        <authorList>
            <person name="Henner D.J."/>
        </authorList>
    </citation>
    <scope>NUCLEOTIDE SEQUENCE [GENOMIC DNA]</scope>
</reference>
<reference key="4">
    <citation type="journal article" date="1997" name="Nature">
        <title>The complete genome sequence of the Gram-positive bacterium Bacillus subtilis.</title>
        <authorList>
            <person name="Kunst F."/>
            <person name="Ogasawara N."/>
            <person name="Moszer I."/>
            <person name="Albertini A.M."/>
            <person name="Alloni G."/>
            <person name="Azevedo V."/>
            <person name="Bertero M.G."/>
            <person name="Bessieres P."/>
            <person name="Bolotin A."/>
            <person name="Borchert S."/>
            <person name="Borriss R."/>
            <person name="Boursier L."/>
            <person name="Brans A."/>
            <person name="Braun M."/>
            <person name="Brignell S.C."/>
            <person name="Bron S."/>
            <person name="Brouillet S."/>
            <person name="Bruschi C.V."/>
            <person name="Caldwell B."/>
            <person name="Capuano V."/>
            <person name="Carter N.M."/>
            <person name="Choi S.-K."/>
            <person name="Codani J.-J."/>
            <person name="Connerton I.F."/>
            <person name="Cummings N.J."/>
            <person name="Daniel R.A."/>
            <person name="Denizot F."/>
            <person name="Devine K.M."/>
            <person name="Duesterhoeft A."/>
            <person name="Ehrlich S.D."/>
            <person name="Emmerson P.T."/>
            <person name="Entian K.-D."/>
            <person name="Errington J."/>
            <person name="Fabret C."/>
            <person name="Ferrari E."/>
            <person name="Foulger D."/>
            <person name="Fritz C."/>
            <person name="Fujita M."/>
            <person name="Fujita Y."/>
            <person name="Fuma S."/>
            <person name="Galizzi A."/>
            <person name="Galleron N."/>
            <person name="Ghim S.-Y."/>
            <person name="Glaser P."/>
            <person name="Goffeau A."/>
            <person name="Golightly E.J."/>
            <person name="Grandi G."/>
            <person name="Guiseppi G."/>
            <person name="Guy B.J."/>
            <person name="Haga K."/>
            <person name="Haiech J."/>
            <person name="Harwood C.R."/>
            <person name="Henaut A."/>
            <person name="Hilbert H."/>
            <person name="Holsappel S."/>
            <person name="Hosono S."/>
            <person name="Hullo M.-F."/>
            <person name="Itaya M."/>
            <person name="Jones L.-M."/>
            <person name="Joris B."/>
            <person name="Karamata D."/>
            <person name="Kasahara Y."/>
            <person name="Klaerr-Blanchard M."/>
            <person name="Klein C."/>
            <person name="Kobayashi Y."/>
            <person name="Koetter P."/>
            <person name="Koningstein G."/>
            <person name="Krogh S."/>
            <person name="Kumano M."/>
            <person name="Kurita K."/>
            <person name="Lapidus A."/>
            <person name="Lardinois S."/>
            <person name="Lauber J."/>
            <person name="Lazarevic V."/>
            <person name="Lee S.-M."/>
            <person name="Levine A."/>
            <person name="Liu H."/>
            <person name="Masuda S."/>
            <person name="Mauel C."/>
            <person name="Medigue C."/>
            <person name="Medina N."/>
            <person name="Mellado R.P."/>
            <person name="Mizuno M."/>
            <person name="Moestl D."/>
            <person name="Nakai S."/>
            <person name="Noback M."/>
            <person name="Noone D."/>
            <person name="O'Reilly M."/>
            <person name="Ogawa K."/>
            <person name="Ogiwara A."/>
            <person name="Oudega B."/>
            <person name="Park S.-H."/>
            <person name="Parro V."/>
            <person name="Pohl T.M."/>
            <person name="Portetelle D."/>
            <person name="Porwollik S."/>
            <person name="Prescott A.M."/>
            <person name="Presecan E."/>
            <person name="Pujic P."/>
            <person name="Purnelle B."/>
            <person name="Rapoport G."/>
            <person name="Rey M."/>
            <person name="Reynolds S."/>
            <person name="Rieger M."/>
            <person name="Rivolta C."/>
            <person name="Rocha E."/>
            <person name="Roche B."/>
            <person name="Rose M."/>
            <person name="Sadaie Y."/>
            <person name="Sato T."/>
            <person name="Scanlan E."/>
            <person name="Schleich S."/>
            <person name="Schroeter R."/>
            <person name="Scoffone F."/>
            <person name="Sekiguchi J."/>
            <person name="Sekowska A."/>
            <person name="Seror S.J."/>
            <person name="Serror P."/>
            <person name="Shin B.-S."/>
            <person name="Soldo B."/>
            <person name="Sorokin A."/>
            <person name="Tacconi E."/>
            <person name="Takagi T."/>
            <person name="Takahashi H."/>
            <person name="Takemaru K."/>
            <person name="Takeuchi M."/>
            <person name="Tamakoshi A."/>
            <person name="Tanaka T."/>
            <person name="Terpstra P."/>
            <person name="Tognoni A."/>
            <person name="Tosato V."/>
            <person name="Uchiyama S."/>
            <person name="Vandenbol M."/>
            <person name="Vannier F."/>
            <person name="Vassarotti A."/>
            <person name="Viari A."/>
            <person name="Wambutt R."/>
            <person name="Wedler E."/>
            <person name="Wedler H."/>
            <person name="Weitzenegger T."/>
            <person name="Winters P."/>
            <person name="Wipat A."/>
            <person name="Yamamoto H."/>
            <person name="Yamane K."/>
            <person name="Yasumoto K."/>
            <person name="Yata K."/>
            <person name="Yoshida K."/>
            <person name="Yoshikawa H.-F."/>
            <person name="Zumstein E."/>
            <person name="Yoshikawa H."/>
            <person name="Danchin A."/>
        </authorList>
    </citation>
    <scope>NUCLEOTIDE SEQUENCE [LARGE SCALE GENOMIC DNA]</scope>
    <source>
        <strain>168</strain>
    </source>
</reference>
<reference key="5">
    <citation type="journal article" date="1984" name="Proc. Natl. Acad. Sci. U.S.A.">
        <title>Characterization of the Bacillus subtilis tryptophan promoter region.</title>
        <authorList>
            <person name="Shimotsu H."/>
            <person name="Henner D.J."/>
        </authorList>
    </citation>
    <scope>NUCLEOTIDE SEQUENCE [GENOMIC DNA] OF 1-40</scope>
</reference>
<reference key="6">
    <citation type="journal article" date="1986" name="J. Bacteriol.">
        <title>Novel form of transcription attenuation regulates expression the Bacillus subtilis tryptophan operon.</title>
        <authorList>
            <person name="Shimotsu H."/>
            <person name="Kuroda M.I."/>
            <person name="Yanofsky C."/>
            <person name="Henner D.J."/>
        </authorList>
    </citation>
    <scope>NUCLEOTIDE SEQUENCE [GENOMIC DNA] OF 1-40</scope>
</reference>
<comment type="function">
    <text evidence="1">Part of a heterotetrameric complex that catalyzes the two-step biosynthesis of anthranilate, an intermediate in the biosynthesis of L-tryptophan. In the first step, the glutamine-binding beta subunit (TrpG) of anthranilate synthase (AS) provides the glutamine amidotransferase activity which generates ammonia as a substrate that, along with chorismate, is used in the second step, catalyzed by the large alpha subunit of AS (TrpE) to produce anthranilate. In the absence of TrpG, TrpE can synthesize anthranilate directly from chorismate and high concentrations of ammonia (By similarity).</text>
</comment>
<comment type="catalytic activity">
    <reaction>
        <text>chorismate + L-glutamine = anthranilate + pyruvate + L-glutamate + H(+)</text>
        <dbReference type="Rhea" id="RHEA:21732"/>
        <dbReference type="ChEBI" id="CHEBI:15361"/>
        <dbReference type="ChEBI" id="CHEBI:15378"/>
        <dbReference type="ChEBI" id="CHEBI:16567"/>
        <dbReference type="ChEBI" id="CHEBI:29748"/>
        <dbReference type="ChEBI" id="CHEBI:29985"/>
        <dbReference type="ChEBI" id="CHEBI:58359"/>
        <dbReference type="EC" id="4.1.3.27"/>
    </reaction>
</comment>
<comment type="cofactor">
    <cofactor evidence="2">
        <name>Mg(2+)</name>
        <dbReference type="ChEBI" id="CHEBI:18420"/>
    </cofactor>
    <text evidence="2">Binds 1 Mg(2+) ion per subunit.</text>
</comment>
<comment type="activity regulation">
    <text evidence="1">Feedback inhibited by tryptophan.</text>
</comment>
<comment type="pathway">
    <text>Amino-acid biosynthesis; L-tryptophan biosynthesis; L-tryptophan from chorismate: step 1/5.</text>
</comment>
<comment type="subunit">
    <text evidence="1">Heterotetramer consisting of two non-identical subunits: a beta subunit (TrpG) and a large alpha subunit (TrpE).</text>
</comment>
<comment type="similarity">
    <text evidence="3">Belongs to the anthranilate synthase component I family.</text>
</comment>
<comment type="sequence caution" evidence="3">
    <conflict type="frameshift" ref="1"/>
</comment>
<comment type="sequence caution" evidence="3">
    <conflict type="frameshift" ref="2"/>
</comment>
<gene>
    <name type="primary">trpE</name>
    <name type="ordered locus">BSU22680</name>
</gene>
<evidence type="ECO:0000250" key="1"/>
<evidence type="ECO:0000250" key="2">
    <source>
        <dbReference type="UniProtKB" id="P00897"/>
    </source>
</evidence>
<evidence type="ECO:0000305" key="3"/>
<name>TRPE_BACSU</name>
<proteinExistence type="inferred from homology"/>
<keyword id="KW-0028">Amino-acid biosynthesis</keyword>
<keyword id="KW-0057">Aromatic amino acid biosynthesis</keyword>
<keyword id="KW-0456">Lyase</keyword>
<keyword id="KW-0460">Magnesium</keyword>
<keyword id="KW-0479">Metal-binding</keyword>
<keyword id="KW-1185">Reference proteome</keyword>
<keyword id="KW-0822">Tryptophan biosynthesis</keyword>
<feature type="chain" id="PRO_0000154079" description="Anthranilate synthase component 1">
    <location>
        <begin position="1"/>
        <end position="515"/>
    </location>
</feature>
<feature type="binding site" evidence="2">
    <location>
        <position position="50"/>
    </location>
    <ligand>
        <name>L-tryptophan</name>
        <dbReference type="ChEBI" id="CHEBI:57912"/>
    </ligand>
</feature>
<feature type="binding site" evidence="2">
    <location>
        <begin position="281"/>
        <end position="283"/>
    </location>
    <ligand>
        <name>L-tryptophan</name>
        <dbReference type="ChEBI" id="CHEBI:57912"/>
    </ligand>
</feature>
<feature type="binding site" evidence="2">
    <location>
        <begin position="316"/>
        <end position="317"/>
    </location>
    <ligand>
        <name>chorismate</name>
        <dbReference type="ChEBI" id="CHEBI:29748"/>
    </ligand>
</feature>
<feature type="binding site" evidence="2">
    <location>
        <position position="343"/>
    </location>
    <ligand>
        <name>Mg(2+)</name>
        <dbReference type="ChEBI" id="CHEBI:18420"/>
    </ligand>
</feature>
<feature type="binding site" evidence="2">
    <location>
        <position position="431"/>
    </location>
    <ligand>
        <name>chorismate</name>
        <dbReference type="ChEBI" id="CHEBI:29748"/>
    </ligand>
</feature>
<feature type="binding site" evidence="2">
    <location>
        <position position="451"/>
    </location>
    <ligand>
        <name>chorismate</name>
        <dbReference type="ChEBI" id="CHEBI:29748"/>
    </ligand>
</feature>
<feature type="binding site" evidence="2">
    <location>
        <begin position="465"/>
        <end position="467"/>
    </location>
    <ligand>
        <name>chorismate</name>
        <dbReference type="ChEBI" id="CHEBI:29748"/>
    </ligand>
</feature>
<feature type="binding site" evidence="2">
    <location>
        <position position="467"/>
    </location>
    <ligand>
        <name>chorismate</name>
        <dbReference type="ChEBI" id="CHEBI:29748"/>
    </ligand>
</feature>
<feature type="binding site" evidence="2">
    <location>
        <position position="480"/>
    </location>
    <ligand>
        <name>Mg(2+)</name>
        <dbReference type="ChEBI" id="CHEBI:18420"/>
    </ligand>
</feature>
<feature type="sequence conflict" description="In Ref. 1; AAA22865 and 2; AAA20862." evidence="3" ref="1 2">
    <original>A</original>
    <variation>P</variation>
    <location>
        <position position="80"/>
    </location>
</feature>
<feature type="sequence conflict" description="In Ref. 1; AAA22865 and 2; AAA20862." evidence="3" ref="1 2">
    <original>A</original>
    <variation>S</variation>
    <location>
        <position position="120"/>
    </location>
</feature>
<organism>
    <name type="scientific">Bacillus subtilis (strain 168)</name>
    <dbReference type="NCBI Taxonomy" id="224308"/>
    <lineage>
        <taxon>Bacteria</taxon>
        <taxon>Bacillati</taxon>
        <taxon>Bacillota</taxon>
        <taxon>Bacilli</taxon>
        <taxon>Bacillales</taxon>
        <taxon>Bacillaceae</taxon>
        <taxon>Bacillus</taxon>
    </lineage>
</organism>
<accession>P03963</accession>
<protein>
    <recommendedName>
        <fullName>Anthranilate synthase component 1</fullName>
        <shortName>AS</shortName>
        <shortName>ASI</shortName>
        <ecNumber>4.1.3.27</ecNumber>
    </recommendedName>
</protein>